<name>TNPO2_HUMAN</name>
<protein>
    <recommendedName>
        <fullName>Transportin-2</fullName>
    </recommendedName>
    <alternativeName>
        <fullName>Karyopherin beta-2b</fullName>
    </alternativeName>
</protein>
<comment type="function">
    <text evidence="1">Probably functions in nuclear protein import as nuclear transport receptor. Serves as receptor for nuclear localization signals (NLS) in cargo substrates. Is thought to mediate docking of the importin/substrate complex to the nuclear pore complex (NPC) through binding to nucleoporin and the complex is subsequently translocated through the pore by an energy requiring, Ran-dependent mechanism. At the nucleoplasmic side of the NPC, Ran binds to the importin, the importin/substrate complex dissociates and importin is re-exported from the nucleus to the cytoplasm where GTP hydrolysis releases Ran. The directionality of nuclear import is thought to be conferred by an asymmetric distribution of the GTP- and GDP-bound forms of Ran between the cytoplasm and nucleus (By similarity).</text>
</comment>
<comment type="interaction">
    <interactant intactId="EBI-431907">
        <id>O14787</id>
    </interactant>
    <interactant intactId="EBI-359248">
        <id>Q96GX9</id>
        <label>APIP</label>
    </interactant>
    <organismsDiffer>false</organismsDiffer>
    <experiments>4</experiments>
</comment>
<comment type="interaction">
    <interactant intactId="EBI-431907">
        <id>O14787</id>
    </interactant>
    <interactant intactId="EBI-946029">
        <id>Q6P1W5</id>
        <label>C1orf94</label>
    </interactant>
    <organismsDiffer>false</organismsDiffer>
    <experiments>3</experiments>
</comment>
<comment type="interaction">
    <interactant intactId="EBI-431907">
        <id>O14787</id>
    </interactant>
    <interactant intactId="EBI-351018">
        <id>Q13557</id>
        <label>CAMK2D</label>
    </interactant>
    <organismsDiffer>false</organismsDiffer>
    <experiments>4</experiments>
</comment>
<comment type="interaction">
    <interactant intactId="EBI-431907">
        <id>O14787</id>
    </interactant>
    <interactant intactId="EBI-949824">
        <id>O00471</id>
        <label>EXOC5</label>
    </interactant>
    <organismsDiffer>false</organismsDiffer>
    <experiments>4</experiments>
</comment>
<comment type="interaction">
    <interactant intactId="EBI-431907">
        <id>O14787</id>
    </interactant>
    <interactant intactId="EBI-10178933">
        <id>V9HW27</id>
        <label>HEL-S-101</label>
    </interactant>
    <organismsDiffer>false</organismsDiffer>
    <experiments>3</experiments>
</comment>
<comment type="interaction">
    <interactant intactId="EBI-431907">
        <id>O14787</id>
    </interactant>
    <interactant intactId="EBI-746999">
        <id>O95198</id>
        <label>KLHL2</label>
    </interactant>
    <organismsDiffer>false</organismsDiffer>
    <experiments>4</experiments>
</comment>
<comment type="interaction">
    <interactant intactId="EBI-431907">
        <id>O14787</id>
    </interactant>
    <interactant intactId="EBI-741141">
        <id>P15531</id>
        <label>NME1</label>
    </interactant>
    <organismsDiffer>false</organismsDiffer>
    <experiments>3</experiments>
</comment>
<comment type="interaction">
    <interactant intactId="EBI-431907">
        <id>O14787</id>
    </interactant>
    <interactant intactId="EBI-10171633">
        <id>Q96PV4</id>
        <label>PNMA5</label>
    </interactant>
    <organismsDiffer>false</organismsDiffer>
    <experiments>3</experiments>
</comment>
<comment type="interaction">
    <interactant intactId="EBI-431907">
        <id>O14787</id>
    </interactant>
    <interactant intactId="EBI-710997">
        <id>P54274</id>
        <label>TERF1</label>
    </interactant>
    <organismsDiffer>false</organismsDiffer>
    <experiments>2</experiments>
</comment>
<comment type="interaction">
    <interactant intactId="EBI-12076664">
        <id>O14787-2</id>
    </interactant>
    <interactant intactId="EBI-10181188">
        <id>Q8N7W2-2</id>
        <label>BEND7</label>
    </interactant>
    <organismsDiffer>false</organismsDiffer>
    <experiments>3</experiments>
</comment>
<comment type="interaction">
    <interactant intactId="EBI-12076664">
        <id>O14787-2</id>
    </interactant>
    <interactant intactId="EBI-517623">
        <id>Q96CA5</id>
        <label>BIRC7</label>
    </interactant>
    <organismsDiffer>false</organismsDiffer>
    <experiments>3</experiments>
</comment>
<comment type="interaction">
    <interactant intactId="EBI-12076664">
        <id>O14787-2</id>
    </interactant>
    <interactant intactId="EBI-718504">
        <id>Q13867</id>
        <label>BLMH</label>
    </interactant>
    <organismsDiffer>false</organismsDiffer>
    <experiments>3</experiments>
</comment>
<comment type="interaction">
    <interactant intactId="EBI-12076664">
        <id>O14787-2</id>
    </interactant>
    <interactant intactId="EBI-11523526">
        <id>Q13554-3</id>
        <label>CAMK2B</label>
    </interactant>
    <organismsDiffer>false</organismsDiffer>
    <experiments>3</experiments>
</comment>
<comment type="interaction">
    <interactant intactId="EBI-12076664">
        <id>O14787-2</id>
    </interactant>
    <interactant intactId="EBI-12020154">
        <id>Q13555-5</id>
        <label>CAMK2G</label>
    </interactant>
    <organismsDiffer>false</organismsDiffer>
    <experiments>3</experiments>
</comment>
<comment type="interaction">
    <interactant intactId="EBI-12076664">
        <id>O14787-2</id>
    </interactant>
    <interactant intactId="EBI-1188472">
        <id>P78358</id>
        <label>CTAG1B</label>
    </interactant>
    <organismsDiffer>false</organismsDiffer>
    <experiments>3</experiments>
</comment>
<comment type="interaction">
    <interactant intactId="EBI-12076664">
        <id>O14787-2</id>
    </interactant>
    <interactant intactId="EBI-1050358">
        <id>P07954</id>
        <label>FH</label>
    </interactant>
    <organismsDiffer>false</organismsDiffer>
    <experiments>3</experiments>
</comment>
<comment type="interaction">
    <interactant intactId="EBI-12076664">
        <id>O14787-2</id>
    </interactant>
    <interactant intactId="EBI-18138793">
        <id>Q9C0B1-2</id>
        <label>FTO</label>
    </interactant>
    <organismsDiffer>false</organismsDiffer>
    <experiments>3</experiments>
</comment>
<comment type="interaction">
    <interactant intactId="EBI-12076664">
        <id>O14787-2</id>
    </interactant>
    <interactant intactId="EBI-9050116">
        <id>Q9BTY2</id>
        <label>FUCA2</label>
    </interactant>
    <organismsDiffer>false</organismsDiffer>
    <experiments>3</experiments>
</comment>
<comment type="interaction">
    <interactant intactId="EBI-12076664">
        <id>O14787-2</id>
    </interactant>
    <interactant intactId="EBI-958183">
        <id>P30793</id>
        <label>GCH1</label>
    </interactant>
    <organismsDiffer>false</organismsDiffer>
    <experiments>3</experiments>
</comment>
<comment type="interaction">
    <interactant intactId="EBI-12076664">
        <id>O14787-2</id>
    </interactant>
    <interactant intactId="EBI-19954058">
        <id>O15499</id>
        <label>GSC2</label>
    </interactant>
    <organismsDiffer>false</organismsDiffer>
    <experiments>3</experiments>
</comment>
<comment type="interaction">
    <interactant intactId="EBI-12076664">
        <id>O14787-2</id>
    </interactant>
    <interactant intactId="EBI-10693436">
        <id>Q9BS75</id>
        <label>KLHL20</label>
    </interactant>
    <organismsDiffer>false</organismsDiffer>
    <experiments>3</experiments>
</comment>
<comment type="interaction">
    <interactant intactId="EBI-12076664">
        <id>O14787-2</id>
    </interactant>
    <interactant intactId="EBI-8524663">
        <id>Q9UH77</id>
        <label>KLHL3</label>
    </interactant>
    <organismsDiffer>false</organismsDiffer>
    <experiments>3</experiments>
</comment>
<comment type="interaction">
    <interactant intactId="EBI-12076664">
        <id>O14787-2</id>
    </interactant>
    <interactant intactId="EBI-2432309">
        <id>Q92876</id>
        <label>KLK6</label>
    </interactant>
    <organismsDiffer>false</organismsDiffer>
    <experiments>3</experiments>
</comment>
<comment type="interaction">
    <interactant intactId="EBI-12076664">
        <id>O14787-2</id>
    </interactant>
    <interactant intactId="EBI-2949715">
        <id>O95678</id>
        <label>KRT75</label>
    </interactant>
    <organismsDiffer>false</organismsDiffer>
    <experiments>3</experiments>
</comment>
<comment type="interaction">
    <interactant intactId="EBI-12076664">
        <id>O14787-2</id>
    </interactant>
    <interactant intactId="EBI-10261141">
        <id>Q8IUC2</id>
        <label>KRTAP8-1</label>
    </interactant>
    <organismsDiffer>false</organismsDiffer>
    <experiments>3</experiments>
</comment>
<comment type="interaction">
    <interactant intactId="EBI-12076664">
        <id>O14787-2</id>
    </interactant>
    <interactant intactId="EBI-9087860">
        <id>P32243-2</id>
        <label>OTX2</label>
    </interactant>
    <organismsDiffer>false</organismsDiffer>
    <experiments>3</experiments>
</comment>
<comment type="interaction">
    <interactant intactId="EBI-12076664">
        <id>O14787-2</id>
    </interactant>
    <interactant intactId="EBI-77926">
        <id>Q9UKS6</id>
        <label>PACSIN3</label>
    </interactant>
    <organismsDiffer>false</organismsDiffer>
    <experiments>3</experiments>
</comment>
<comment type="interaction">
    <interactant intactId="EBI-12076664">
        <id>O14787-2</id>
    </interactant>
    <interactant intactId="EBI-350517">
        <id>Q9NR12</id>
        <label>PDLIM7</label>
    </interactant>
    <organismsDiffer>false</organismsDiffer>
    <experiments>3</experiments>
</comment>
<comment type="interaction">
    <interactant intactId="EBI-12076664">
        <id>O14787-2</id>
    </interactant>
    <interactant intactId="EBI-721782">
        <id>Q96BK5</id>
        <label>PINX1</label>
    </interactant>
    <organismsDiffer>false</organismsDiffer>
    <experiments>3</experiments>
</comment>
<comment type="interaction">
    <interactant intactId="EBI-12076664">
        <id>O14787-2</id>
    </interactant>
    <interactant intactId="EBI-12029004">
        <id>P78424</id>
        <label>POU6F2</label>
    </interactant>
    <organismsDiffer>false</organismsDiffer>
    <experiments>3</experiments>
</comment>
<comment type="interaction">
    <interactant intactId="EBI-12076664">
        <id>O14787-2</id>
    </interactant>
    <interactant intactId="EBI-745545">
        <id>Q9NR22</id>
        <label>PRMT8</label>
    </interactant>
    <organismsDiffer>false</organismsDiffer>
    <experiments>3</experiments>
</comment>
<comment type="interaction">
    <interactant intactId="EBI-12076664">
        <id>O14787-2</id>
    </interactant>
    <interactant intactId="EBI-848624">
        <id>P32322</id>
        <label>PYCR1</label>
    </interactant>
    <organismsDiffer>false</organismsDiffer>
    <experiments>3</experiments>
</comment>
<comment type="interaction">
    <interactant intactId="EBI-12076664">
        <id>O14787-2</id>
    </interactant>
    <interactant intactId="EBI-286642">
        <id>P62826</id>
        <label>RAN</label>
    </interactant>
    <organismsDiffer>false</organismsDiffer>
    <experiments>3</experiments>
</comment>
<comment type="interaction">
    <interactant intactId="EBI-12076664">
        <id>O14787-2</id>
    </interactant>
    <interactant intactId="EBI-10964453">
        <id>Q8IUH3-3</id>
        <label>RBM45</label>
    </interactant>
    <organismsDiffer>false</organismsDiffer>
    <experiments>3</experiments>
</comment>
<comment type="interaction">
    <interactant intactId="EBI-12076664">
        <id>O14787-2</id>
    </interactant>
    <interactant intactId="EBI-10286004">
        <id>Q86WS4</id>
        <label>REDIC1</label>
    </interactant>
    <organismsDiffer>false</organismsDiffer>
    <experiments>3</experiments>
</comment>
<comment type="interaction">
    <interactant intactId="EBI-12076664">
        <id>O14787-2</id>
    </interactant>
    <interactant intactId="EBI-747925">
        <id>Q9NQG5</id>
        <label>RPRD1B</label>
    </interactant>
    <organismsDiffer>false</organismsDiffer>
    <experiments>3</experiments>
</comment>
<comment type="interaction">
    <interactant intactId="EBI-12076664">
        <id>O14787-2</id>
    </interactant>
    <interactant intactId="EBI-748621">
        <id>Q9UJW9</id>
        <label>SERTAD3</label>
    </interactant>
    <organismsDiffer>false</organismsDiffer>
    <experiments>3</experiments>
</comment>
<comment type="interaction">
    <interactant intactId="EBI-12076664">
        <id>O14787-2</id>
    </interactant>
    <interactant intactId="EBI-12223157">
        <id>Q15637-4</id>
        <label>SF1</label>
    </interactant>
    <organismsDiffer>false</organismsDiffer>
    <experiments>3</experiments>
</comment>
<comment type="interaction">
    <interactant intactId="EBI-12076664">
        <id>O14787-2</id>
    </interactant>
    <interactant intactId="EBI-2853051">
        <id>Q13207</id>
        <label>TBX2</label>
    </interactant>
    <organismsDiffer>false</organismsDiffer>
    <experiments>3</experiments>
</comment>
<comment type="interaction">
    <interactant intactId="EBI-12076664">
        <id>O14787-2</id>
    </interactant>
    <interactant intactId="EBI-3925505">
        <id>Q8TBB0</id>
        <label>THAP6</label>
    </interactant>
    <organismsDiffer>false</organismsDiffer>
    <experiments>3</experiments>
</comment>
<comment type="interaction">
    <interactant intactId="EBI-12076664">
        <id>O14787-2</id>
    </interactant>
    <interactant intactId="EBI-2340370">
        <id>Q9BZR9</id>
        <label>TRIM8</label>
    </interactant>
    <organismsDiffer>false</organismsDiffer>
    <experiments>3</experiments>
</comment>
<comment type="interaction">
    <interactant intactId="EBI-12076664">
        <id>O14787-2</id>
    </interactant>
    <interactant intactId="EBI-10188476">
        <id>A0A0C4DGF1</id>
        <label>ZBTB32</label>
    </interactant>
    <organismsDiffer>false</organismsDiffer>
    <experiments>3</experiments>
</comment>
<comment type="interaction">
    <interactant intactId="EBI-12076664">
        <id>O14787-2</id>
    </interactant>
    <interactant intactId="EBI-14104088">
        <id>Q53FD0-2</id>
        <label>ZC2HC1C</label>
    </interactant>
    <organismsDiffer>false</organismsDiffer>
    <experiments>3</experiments>
</comment>
<comment type="subcellular location">
    <subcellularLocation>
        <location evidence="1">Cytoplasm</location>
    </subcellularLocation>
    <subcellularLocation>
        <location evidence="1">Nucleus</location>
    </subcellularLocation>
</comment>
<comment type="alternative products">
    <event type="alternative splicing"/>
    <isoform>
        <id>O14787-1</id>
        <name>1</name>
        <sequence type="displayed"/>
    </isoform>
    <isoform>
        <id>O14787-2</id>
        <name>2</name>
        <name>beta2b</name>
        <sequence type="described" ref="VSP_009657"/>
    </isoform>
</comment>
<comment type="disease" evidence="4 5 6">
    <disease id="DI-06250">
        <name>Intellectual developmental disorder with hypotonia, impaired speech, and dysmorphic facies</name>
        <acronym>IDDHISD</acronym>
        <description>An autosomal dominant disorder characterized by global developmental delay, impaired intellectual development, poor or absent speech, hypotonia, ophthalmologic abnormalities, and non-specific dysmorphic features. Some affected individuals have seizures, and a few have involvement of other organ systems.</description>
        <dbReference type="MIM" id="619556"/>
    </disease>
    <text>The disease is caused by variants affecting the gene represented in this entry.</text>
</comment>
<comment type="similarity">
    <text evidence="9">Belongs to the importin beta family. Importin beta-2 subfamily.</text>
</comment>
<accession>O14787</accession>
<accession>O14655</accession>
<accession>Q6IN77</accession>
<reference key="1">
    <citation type="journal article" date="1997" name="J. Cell Biol.">
        <title>Transportin-mediated nuclear import of heterogeneous nuclear RNP proteins.</title>
        <authorList>
            <person name="Siomi M.C."/>
            <person name="Eder P.S."/>
            <person name="Kataoka N."/>
            <person name="Wan L."/>
            <person name="Liu Q."/>
            <person name="Dreyfuss G."/>
        </authorList>
    </citation>
    <scope>NUCLEOTIDE SEQUENCE [MRNA] (ISOFORM 1)</scope>
</reference>
<reference key="2">
    <citation type="submission" date="1997-06" db="EMBL/GenBank/DDBJ databases">
        <title>Human karyopherin beta2b: an homolog of human karyopherin beta2.</title>
        <authorList>
            <person name="Bonifaci N."/>
            <person name="Radu A."/>
            <person name="Blobel G."/>
        </authorList>
    </citation>
    <scope>NUCLEOTIDE SEQUENCE [MRNA] (ISOFORM 2)</scope>
    <scope>VARIANT IDDHISD ARG-32</scope>
</reference>
<reference key="3">
    <citation type="journal article" date="2004" name="Nature">
        <title>The DNA sequence and biology of human chromosome 19.</title>
        <authorList>
            <person name="Grimwood J."/>
            <person name="Gordon L.A."/>
            <person name="Olsen A.S."/>
            <person name="Terry A."/>
            <person name="Schmutz J."/>
            <person name="Lamerdin J.E."/>
            <person name="Hellsten U."/>
            <person name="Goodstein D."/>
            <person name="Couronne O."/>
            <person name="Tran-Gyamfi M."/>
            <person name="Aerts A."/>
            <person name="Altherr M."/>
            <person name="Ashworth L."/>
            <person name="Bajorek E."/>
            <person name="Black S."/>
            <person name="Branscomb E."/>
            <person name="Caenepeel S."/>
            <person name="Carrano A.V."/>
            <person name="Caoile C."/>
            <person name="Chan Y.M."/>
            <person name="Christensen M."/>
            <person name="Cleland C.A."/>
            <person name="Copeland A."/>
            <person name="Dalin E."/>
            <person name="Dehal P."/>
            <person name="Denys M."/>
            <person name="Detter J.C."/>
            <person name="Escobar J."/>
            <person name="Flowers D."/>
            <person name="Fotopulos D."/>
            <person name="Garcia C."/>
            <person name="Georgescu A.M."/>
            <person name="Glavina T."/>
            <person name="Gomez M."/>
            <person name="Gonzales E."/>
            <person name="Groza M."/>
            <person name="Hammon N."/>
            <person name="Hawkins T."/>
            <person name="Haydu L."/>
            <person name="Ho I."/>
            <person name="Huang W."/>
            <person name="Israni S."/>
            <person name="Jett J."/>
            <person name="Kadner K."/>
            <person name="Kimball H."/>
            <person name="Kobayashi A."/>
            <person name="Larionov V."/>
            <person name="Leem S.-H."/>
            <person name="Lopez F."/>
            <person name="Lou Y."/>
            <person name="Lowry S."/>
            <person name="Malfatti S."/>
            <person name="Martinez D."/>
            <person name="McCready P.M."/>
            <person name="Medina C."/>
            <person name="Morgan J."/>
            <person name="Nelson K."/>
            <person name="Nolan M."/>
            <person name="Ovcharenko I."/>
            <person name="Pitluck S."/>
            <person name="Pollard M."/>
            <person name="Popkie A.P."/>
            <person name="Predki P."/>
            <person name="Quan G."/>
            <person name="Ramirez L."/>
            <person name="Rash S."/>
            <person name="Retterer J."/>
            <person name="Rodriguez A."/>
            <person name="Rogers S."/>
            <person name="Salamov A."/>
            <person name="Salazar A."/>
            <person name="She X."/>
            <person name="Smith D."/>
            <person name="Slezak T."/>
            <person name="Solovyev V."/>
            <person name="Thayer N."/>
            <person name="Tice H."/>
            <person name="Tsai M."/>
            <person name="Ustaszewska A."/>
            <person name="Vo N."/>
            <person name="Wagner M."/>
            <person name="Wheeler J."/>
            <person name="Wu K."/>
            <person name="Xie G."/>
            <person name="Yang J."/>
            <person name="Dubchak I."/>
            <person name="Furey T.S."/>
            <person name="DeJong P."/>
            <person name="Dickson M."/>
            <person name="Gordon D."/>
            <person name="Eichler E.E."/>
            <person name="Pennacchio L.A."/>
            <person name="Richardson P."/>
            <person name="Stubbs L."/>
            <person name="Rokhsar D.S."/>
            <person name="Myers R.M."/>
            <person name="Rubin E.M."/>
            <person name="Lucas S.M."/>
        </authorList>
    </citation>
    <scope>NUCLEOTIDE SEQUENCE [LARGE SCALE GENOMIC DNA]</scope>
</reference>
<reference key="4">
    <citation type="submission" date="2005-07" db="EMBL/GenBank/DDBJ databases">
        <authorList>
            <person name="Mural R.J."/>
            <person name="Istrail S."/>
            <person name="Sutton G."/>
            <person name="Florea L."/>
            <person name="Halpern A.L."/>
            <person name="Mobarry C.M."/>
            <person name="Lippert R."/>
            <person name="Walenz B."/>
            <person name="Shatkay H."/>
            <person name="Dew I."/>
            <person name="Miller J.R."/>
            <person name="Flanigan M.J."/>
            <person name="Edwards N.J."/>
            <person name="Bolanos R."/>
            <person name="Fasulo D."/>
            <person name="Halldorsson B.V."/>
            <person name="Hannenhalli S."/>
            <person name="Turner R."/>
            <person name="Yooseph S."/>
            <person name="Lu F."/>
            <person name="Nusskern D.R."/>
            <person name="Shue B.C."/>
            <person name="Zheng X.H."/>
            <person name="Zhong F."/>
            <person name="Delcher A.L."/>
            <person name="Huson D.H."/>
            <person name="Kravitz S.A."/>
            <person name="Mouchard L."/>
            <person name="Reinert K."/>
            <person name="Remington K.A."/>
            <person name="Clark A.G."/>
            <person name="Waterman M.S."/>
            <person name="Eichler E.E."/>
            <person name="Adams M.D."/>
            <person name="Hunkapiller M.W."/>
            <person name="Myers E.W."/>
            <person name="Venter J.C."/>
        </authorList>
    </citation>
    <scope>NUCLEOTIDE SEQUENCE [LARGE SCALE GENOMIC DNA]</scope>
</reference>
<reference key="5">
    <citation type="journal article" date="2004" name="Genome Res.">
        <title>The status, quality, and expansion of the NIH full-length cDNA project: the Mammalian Gene Collection (MGC).</title>
        <authorList>
            <consortium name="The MGC Project Team"/>
        </authorList>
    </citation>
    <scope>NUCLEOTIDE SEQUENCE [LARGE SCALE MRNA] (ISOFORM 2)</scope>
    <source>
        <tissue>PNS</tissue>
    </source>
</reference>
<reference key="6">
    <citation type="journal article" date="2009" name="Science">
        <title>Lysine acetylation targets protein complexes and co-regulates major cellular functions.</title>
        <authorList>
            <person name="Choudhary C."/>
            <person name="Kumar C."/>
            <person name="Gnad F."/>
            <person name="Nielsen M.L."/>
            <person name="Rehman M."/>
            <person name="Walther T.C."/>
            <person name="Olsen J.V."/>
            <person name="Mann M."/>
        </authorList>
    </citation>
    <scope>ACETYLATION [LARGE SCALE ANALYSIS] AT LYS-862</scope>
    <scope>IDENTIFICATION BY MASS SPECTROMETRY [LARGE SCALE ANALYSIS]</scope>
</reference>
<reference key="7">
    <citation type="journal article" date="2011" name="BMC Syst. Biol.">
        <title>Initial characterization of the human central proteome.</title>
        <authorList>
            <person name="Burkard T.R."/>
            <person name="Planyavsky M."/>
            <person name="Kaupe I."/>
            <person name="Breitwieser F.P."/>
            <person name="Buerckstuemmer T."/>
            <person name="Bennett K.L."/>
            <person name="Superti-Furga G."/>
            <person name="Colinge J."/>
        </authorList>
    </citation>
    <scope>IDENTIFICATION BY MASS SPECTROMETRY [LARGE SCALE ANALYSIS]</scope>
</reference>
<reference key="8">
    <citation type="journal article" date="2012" name="N. Engl. J. Med.">
        <title>Diagnostic exome sequencing in persons with severe intellectual disability.</title>
        <authorList>
            <person name="de Ligt J."/>
            <person name="Willemsen M.H."/>
            <person name="van Bon B.W."/>
            <person name="Kleefstra T."/>
            <person name="Yntema H.G."/>
            <person name="Kroes T."/>
            <person name="Vulto-van Silfhout A.T."/>
            <person name="Koolen D.A."/>
            <person name="de Vries P."/>
            <person name="Gilissen C."/>
            <person name="del Rosario M."/>
            <person name="Hoischen A."/>
            <person name="Scheffer H."/>
            <person name="de Vries B.B."/>
            <person name="Brunner H.G."/>
            <person name="Veltman J.A."/>
            <person name="Vissers L.E."/>
        </authorList>
    </citation>
    <scope>VARIANT IDDHISD CYS-370</scope>
</reference>
<reference key="9">
    <citation type="journal article" date="2021" name="Am. J. Hum. Genet.">
        <title>TNPO2 variants associate with human developmental delays, neurologic deficits, and dysmorphic features and alter TNPO2 activity in Drosophila.</title>
        <authorList>
            <consortium name="Undiagnosed Diseases Network"/>
            <person name="Goodman L.D."/>
            <person name="Cope H."/>
            <person name="Nil Z."/>
            <person name="Ravenscroft T.A."/>
            <person name="Charng W.L."/>
            <person name="Lu S."/>
            <person name="Tien A.C."/>
            <person name="Pfundt R."/>
            <person name="Koolen D.A."/>
            <person name="Haaxma C.A."/>
            <person name="Veenstra-Knol H.E."/>
            <person name="Wassink-Ruiter J.S.K."/>
            <person name="Wevers M.R."/>
            <person name="Jones M."/>
            <person name="Walsh L.E."/>
            <person name="Klee V.H."/>
            <person name="Theunis M."/>
            <person name="Legius E."/>
            <person name="Steel D."/>
            <person name="Barwick K.E.S."/>
            <person name="Kurian M.A."/>
            <person name="Mohammad S.S."/>
            <person name="Dale R.C."/>
            <person name="Terhal P.A."/>
            <person name="van Binsbergen E."/>
            <person name="Kirmse B."/>
            <person name="Robinette B."/>
            <person name="Cogne B."/>
            <person name="Isidor B."/>
            <person name="Grebe T.A."/>
            <person name="Kulch P."/>
            <person name="Hainline B.E."/>
            <person name="Sapp K."/>
            <person name="Morava E."/>
            <person name="Klee E.W."/>
            <person name="Macke E.L."/>
            <person name="Trapane P."/>
            <person name="Spencer C."/>
            <person name="Si Y."/>
            <person name="Begtrup A."/>
            <person name="Moulton M.J."/>
            <person name="Dutta D."/>
            <person name="Kanca O."/>
            <person name="Wangler M.F."/>
            <person name="Yamamoto S."/>
            <person name="Bellen H.J."/>
            <person name="Tan Q.K."/>
        </authorList>
    </citation>
    <scope>VARIANTS IDDHISD ARG-28; ARG-32; ARG-61; ASN-118; ASN-156; ARG-370; CYS-370; 491-LYS-ARG-492 DELINS GLN-TRP; LEU-514; VAL-546; PHE-548; 649-ALA--LEU-652 DEL AND CYS-727</scope>
    <scope>INVOLVEMENT IN IDDHISD</scope>
</reference>
<proteinExistence type="evidence at protein level"/>
<dbReference type="EMBL" id="AF019039">
    <property type="protein sequence ID" value="AAB83973.1"/>
    <property type="molecule type" value="mRNA"/>
</dbReference>
<dbReference type="EMBL" id="AF007748">
    <property type="protein sequence ID" value="AAB71349.1"/>
    <property type="molecule type" value="mRNA"/>
</dbReference>
<dbReference type="EMBL" id="AC018761">
    <property type="status" value="NOT_ANNOTATED_CDS"/>
    <property type="molecule type" value="Genomic_DNA"/>
</dbReference>
<dbReference type="EMBL" id="CH471106">
    <property type="protein sequence ID" value="EAW84300.1"/>
    <property type="molecule type" value="Genomic_DNA"/>
</dbReference>
<dbReference type="EMBL" id="BC072420">
    <property type="protein sequence ID" value="AAH72420.1"/>
    <property type="molecule type" value="mRNA"/>
</dbReference>
<dbReference type="CCDS" id="CCDS45991.1">
    <molecule id="O14787-1"/>
</dbReference>
<dbReference type="CCDS" id="CCDS45992.1">
    <molecule id="O14787-2"/>
</dbReference>
<dbReference type="RefSeq" id="NP_001129667.1">
    <molecule id="O14787-2"/>
    <property type="nucleotide sequence ID" value="NM_001136195.2"/>
</dbReference>
<dbReference type="RefSeq" id="NP_001129668.1">
    <molecule id="O14787-1"/>
    <property type="nucleotide sequence ID" value="NM_001136196.2"/>
</dbReference>
<dbReference type="RefSeq" id="NP_001369165.1">
    <molecule id="O14787-2"/>
    <property type="nucleotide sequence ID" value="NM_001382236.1"/>
</dbReference>
<dbReference type="RefSeq" id="NP_001369166.1">
    <molecule id="O14787-2"/>
    <property type="nucleotide sequence ID" value="NM_001382237.1"/>
</dbReference>
<dbReference type="RefSeq" id="NP_001369167.1">
    <molecule id="O14787-2"/>
    <property type="nucleotide sequence ID" value="NM_001382238.1"/>
</dbReference>
<dbReference type="RefSeq" id="NP_001369168.1">
    <molecule id="O14787-2"/>
    <property type="nucleotide sequence ID" value="NM_001382239.1"/>
</dbReference>
<dbReference type="RefSeq" id="NP_001369169.1">
    <molecule id="O14787-1"/>
    <property type="nucleotide sequence ID" value="NM_001382240.1"/>
</dbReference>
<dbReference type="RefSeq" id="NP_001369170.1">
    <molecule id="O14787-1"/>
    <property type="nucleotide sequence ID" value="NM_001382241.1"/>
</dbReference>
<dbReference type="RefSeq" id="NP_001369171.1">
    <molecule id="O14787-1"/>
    <property type="nucleotide sequence ID" value="NM_001382242.1"/>
</dbReference>
<dbReference type="RefSeq" id="NP_038461.2">
    <molecule id="O14787-2"/>
    <property type="nucleotide sequence ID" value="NM_013433.4"/>
</dbReference>
<dbReference type="SMR" id="O14787"/>
<dbReference type="BioGRID" id="119024">
    <property type="interactions" value="245"/>
</dbReference>
<dbReference type="CORUM" id="O14787"/>
<dbReference type="FunCoup" id="O14787">
    <property type="interactions" value="4861"/>
</dbReference>
<dbReference type="IntAct" id="O14787">
    <property type="interactions" value="143"/>
</dbReference>
<dbReference type="MINT" id="O14787"/>
<dbReference type="STRING" id="9606.ENSP00000407182"/>
<dbReference type="TCDB" id="1.I.1.1.3">
    <property type="family name" value="the nuclear pore complex (npc) family"/>
</dbReference>
<dbReference type="GlyGen" id="O14787">
    <property type="glycosylation" value="1 site, 1 O-linked glycan (1 site)"/>
</dbReference>
<dbReference type="iPTMnet" id="O14787"/>
<dbReference type="PhosphoSitePlus" id="O14787"/>
<dbReference type="SwissPalm" id="O14787"/>
<dbReference type="BioMuta" id="TNPO2"/>
<dbReference type="jPOST" id="O14787"/>
<dbReference type="MassIVE" id="O14787"/>
<dbReference type="PaxDb" id="9606-ENSP00000407182"/>
<dbReference type="PeptideAtlas" id="O14787"/>
<dbReference type="ProteomicsDB" id="48235">
    <molecule id="O14787-1"/>
</dbReference>
<dbReference type="ProteomicsDB" id="48236">
    <molecule id="O14787-2"/>
</dbReference>
<dbReference type="Pumba" id="O14787"/>
<dbReference type="Antibodypedia" id="26113">
    <property type="antibodies" value="90 antibodies from 19 providers"/>
</dbReference>
<dbReference type="DNASU" id="30000"/>
<dbReference type="Ensembl" id="ENST00000356861.9">
    <molecule id="O14787-2"/>
    <property type="protein sequence ID" value="ENSP00000349321.4"/>
    <property type="gene ID" value="ENSG00000105576.16"/>
</dbReference>
<dbReference type="Ensembl" id="ENST00000425528.6">
    <molecule id="O14787-1"/>
    <property type="protein sequence ID" value="ENSP00000407182.1"/>
    <property type="gene ID" value="ENSG00000105576.16"/>
</dbReference>
<dbReference type="Ensembl" id="ENST00000450764.6">
    <molecule id="O14787-2"/>
    <property type="protein sequence ID" value="ENSP00000397379.2"/>
    <property type="gene ID" value="ENSG00000105576.16"/>
</dbReference>
<dbReference type="Ensembl" id="ENST00000588216.5">
    <molecule id="O14787-2"/>
    <property type="protein sequence ID" value="ENSP00000465625.1"/>
    <property type="gene ID" value="ENSG00000105576.16"/>
</dbReference>
<dbReference type="Ensembl" id="ENST00000592287.5">
    <molecule id="O14787-1"/>
    <property type="protein sequence ID" value="ENSP00000468434.1"/>
    <property type="gene ID" value="ENSG00000105576.16"/>
</dbReference>
<dbReference type="GeneID" id="30000"/>
<dbReference type="KEGG" id="hsa:30000"/>
<dbReference type="MANE-Select" id="ENST00000425528.6">
    <property type="protein sequence ID" value="ENSP00000407182.1"/>
    <property type="RefSeq nucleotide sequence ID" value="NM_001382241.1"/>
    <property type="RefSeq protein sequence ID" value="NP_001369170.1"/>
</dbReference>
<dbReference type="UCSC" id="uc002muo.4">
    <molecule id="O14787-1"/>
    <property type="organism name" value="human"/>
</dbReference>
<dbReference type="AGR" id="HGNC:19998"/>
<dbReference type="CTD" id="30000"/>
<dbReference type="DisGeNET" id="30000"/>
<dbReference type="GeneCards" id="TNPO2"/>
<dbReference type="HGNC" id="HGNC:19998">
    <property type="gene designation" value="TNPO2"/>
</dbReference>
<dbReference type="HPA" id="ENSG00000105576">
    <property type="expression patterns" value="Low tissue specificity"/>
</dbReference>
<dbReference type="MalaCards" id="TNPO2"/>
<dbReference type="MIM" id="603002">
    <property type="type" value="gene"/>
</dbReference>
<dbReference type="MIM" id="619556">
    <property type="type" value="phenotype"/>
</dbReference>
<dbReference type="neXtProt" id="NX_O14787"/>
<dbReference type="OpenTargets" id="ENSG00000105576"/>
<dbReference type="PharmGKB" id="PA134921349"/>
<dbReference type="VEuPathDB" id="HostDB:ENSG00000105576"/>
<dbReference type="eggNOG" id="KOG2023">
    <property type="taxonomic scope" value="Eukaryota"/>
</dbReference>
<dbReference type="GeneTree" id="ENSGT00940000156708"/>
<dbReference type="HOGENOM" id="CLU_008136_1_0_1"/>
<dbReference type="InParanoid" id="O14787"/>
<dbReference type="OMA" id="SNIMMEY"/>
<dbReference type="OrthoDB" id="951172at2759"/>
<dbReference type="PAN-GO" id="O14787">
    <property type="GO annotations" value="5 GO annotations based on evolutionary models"/>
</dbReference>
<dbReference type="PhylomeDB" id="O14787"/>
<dbReference type="TreeFam" id="TF300825"/>
<dbReference type="PathwayCommons" id="O14787"/>
<dbReference type="SignaLink" id="O14787"/>
<dbReference type="BioGRID-ORCS" id="30000">
    <property type="hits" value="18 hits in 1161 CRISPR screens"/>
</dbReference>
<dbReference type="CD-CODE" id="232F8A39">
    <property type="entry name" value="P-body"/>
</dbReference>
<dbReference type="CD-CODE" id="DEE660B4">
    <property type="entry name" value="Stress granule"/>
</dbReference>
<dbReference type="ChiTaRS" id="TNPO2">
    <property type="organism name" value="human"/>
</dbReference>
<dbReference type="GeneWiki" id="TNPO2"/>
<dbReference type="GenomeRNAi" id="30000"/>
<dbReference type="Pharos" id="O14787">
    <property type="development level" value="Tbio"/>
</dbReference>
<dbReference type="PRO" id="PR:O14787"/>
<dbReference type="Proteomes" id="UP000005640">
    <property type="component" value="Chromosome 19"/>
</dbReference>
<dbReference type="RNAct" id="O14787">
    <property type="molecule type" value="protein"/>
</dbReference>
<dbReference type="Bgee" id="ENSG00000105576">
    <property type="expression patterns" value="Expressed in cortical plate and 209 other cell types or tissues"/>
</dbReference>
<dbReference type="ExpressionAtlas" id="O14787">
    <property type="expression patterns" value="baseline and differential"/>
</dbReference>
<dbReference type="GO" id="GO:0005737">
    <property type="term" value="C:cytoplasm"/>
    <property type="evidence" value="ECO:0000318"/>
    <property type="project" value="GO_Central"/>
</dbReference>
<dbReference type="GO" id="GO:0005634">
    <property type="term" value="C:nucleus"/>
    <property type="evidence" value="ECO:0000318"/>
    <property type="project" value="GO_Central"/>
</dbReference>
<dbReference type="GO" id="GO:0061608">
    <property type="term" value="F:nuclear import signal receptor activity"/>
    <property type="evidence" value="ECO:0000318"/>
    <property type="project" value="GO_Central"/>
</dbReference>
<dbReference type="GO" id="GO:0008139">
    <property type="term" value="F:nuclear localization sequence binding"/>
    <property type="evidence" value="ECO:0000318"/>
    <property type="project" value="GO_Central"/>
</dbReference>
<dbReference type="GO" id="GO:0031267">
    <property type="term" value="F:small GTPase binding"/>
    <property type="evidence" value="ECO:0007669"/>
    <property type="project" value="InterPro"/>
</dbReference>
<dbReference type="GO" id="GO:0051148">
    <property type="term" value="P:negative regulation of muscle cell differentiation"/>
    <property type="evidence" value="ECO:0007669"/>
    <property type="project" value="Ensembl"/>
</dbReference>
<dbReference type="GO" id="GO:0006606">
    <property type="term" value="P:protein import into nucleus"/>
    <property type="evidence" value="ECO:0000318"/>
    <property type="project" value="GO_Central"/>
</dbReference>
<dbReference type="Gene3D" id="1.25.10.10">
    <property type="entry name" value="Leucine-rich Repeat Variant"/>
    <property type="match status" value="2"/>
</dbReference>
<dbReference type="InterPro" id="IPR011989">
    <property type="entry name" value="ARM-like"/>
</dbReference>
<dbReference type="InterPro" id="IPR016024">
    <property type="entry name" value="ARM-type_fold"/>
</dbReference>
<dbReference type="InterPro" id="IPR000357">
    <property type="entry name" value="HEAT"/>
</dbReference>
<dbReference type="InterPro" id="IPR001494">
    <property type="entry name" value="Importin-beta_N"/>
</dbReference>
<dbReference type="InterPro" id="IPR040122">
    <property type="entry name" value="Importin_beta"/>
</dbReference>
<dbReference type="PANTHER" id="PTHR10527">
    <property type="entry name" value="IMPORTIN BETA"/>
    <property type="match status" value="1"/>
</dbReference>
<dbReference type="Pfam" id="PF02985">
    <property type="entry name" value="HEAT"/>
    <property type="match status" value="2"/>
</dbReference>
<dbReference type="Pfam" id="PF13513">
    <property type="entry name" value="HEAT_EZ"/>
    <property type="match status" value="1"/>
</dbReference>
<dbReference type="Pfam" id="PF03810">
    <property type="entry name" value="IBN_N"/>
    <property type="match status" value="1"/>
</dbReference>
<dbReference type="SMART" id="SM00913">
    <property type="entry name" value="IBN_N"/>
    <property type="match status" value="1"/>
</dbReference>
<dbReference type="SUPFAM" id="SSF48371">
    <property type="entry name" value="ARM repeat"/>
    <property type="match status" value="1"/>
</dbReference>
<keyword id="KW-0007">Acetylation</keyword>
<keyword id="KW-0025">Alternative splicing</keyword>
<keyword id="KW-0963">Cytoplasm</keyword>
<keyword id="KW-0225">Disease variant</keyword>
<keyword id="KW-0991">Intellectual disability</keyword>
<keyword id="KW-0539">Nucleus</keyword>
<keyword id="KW-0653">Protein transport</keyword>
<keyword id="KW-1267">Proteomics identification</keyword>
<keyword id="KW-1185">Reference proteome</keyword>
<keyword id="KW-0677">Repeat</keyword>
<keyword id="KW-0813">Transport</keyword>
<organism>
    <name type="scientific">Homo sapiens</name>
    <name type="common">Human</name>
    <dbReference type="NCBI Taxonomy" id="9606"/>
    <lineage>
        <taxon>Eukaryota</taxon>
        <taxon>Metazoa</taxon>
        <taxon>Chordata</taxon>
        <taxon>Craniata</taxon>
        <taxon>Vertebrata</taxon>
        <taxon>Euteleostomi</taxon>
        <taxon>Mammalia</taxon>
        <taxon>Eutheria</taxon>
        <taxon>Euarchontoglires</taxon>
        <taxon>Primates</taxon>
        <taxon>Haplorrhini</taxon>
        <taxon>Catarrhini</taxon>
        <taxon>Hominidae</taxon>
        <taxon>Homo</taxon>
    </lineage>
</organism>
<sequence length="897" mass="101388">MDWQPDEQGLQQVLQLLKDSQSPNTATQRIVQDKLKQLNQFPDFNNYLIFVLTRLKSEDEPTRSLSGLILKNNVKAHYQSFPPPVADFIKQECLNNIGDASSLIRATIGILITTIASKGELQMWPELLPQLCNLLNSEDYNTCEGAFGALQKICEDSSELLDSDALNRPLNIMIPKFLQFFKHCSPKIRSHAIACVNQFIMDRAQALMDNIDTFIEHLFALAVDDDPEVRKNVCRALVMLLEVRIDRLIPHMHSIIQYMLQRTQDHDENVALEACEFWLTLAEQPICKEVLASHLVQLIPILVNGMKYSEIDIILLKGDVEEDEAVPDSEQDIKPRFHKSRTVTLPHEAERPDGSEDAEDDDDDDALSDWNLRKCSAAALDVLANVFREELLPHLLPLLKGLLFHPEWVVKESGILVLGAIAEGCMQGMVPYLPELIPHLIQCLSDKKALVRSIACWTLSRYAHWVVSQPPDMHLKPLMTELLKRILDGNKRVQEAACSAFATLEEEACTELVPYLSYILDTLVFAFGKYQHKNLLILYDAIGTLADSVGHHLNQPEYIQKLMPPLIQKWNELKDEDKDLFPLLECLSSVATALQSGFLPYCEPVYQRCVTLVQKTLAQAMMYTQHPEQYEAPDKDFMIVALDLLSGLAEGLGGHVEQLVARSNIMTLLFQCMQDSMPEVRQSSFALLGDLTKACFIHVKPCIAEFMPILGTNLNPEFISVCNNATWAIGEICMQMGAEMQPYVQMVLNNLVEIINRPNTPKTLLENTGRLTSPSAIPAITIGRLGYVCPQEVAPMLQQFIRPWCTSLRNIRDNEEKDSAFRGICMMIGVNPGGVVQDFIFFCDAVASWVSPKDDLRDMFYKILHGFKDQVGEDNWQQFSEQFPPLLKERLAAFYGV</sequence>
<gene>
    <name type="primary">TNPO2</name>
</gene>
<feature type="chain" id="PRO_0000120767" description="Transportin-2">
    <location>
        <begin position="1"/>
        <end position="897"/>
    </location>
</feature>
<feature type="repeat" description="HEAT 1" evidence="2">
    <location>
        <begin position="9"/>
        <end position="36"/>
    </location>
</feature>
<feature type="domain" description="Importin N-terminal">
    <location>
        <begin position="31"/>
        <end position="99"/>
    </location>
</feature>
<feature type="repeat" description="HEAT 2" evidence="2">
    <location>
        <begin position="41"/>
        <end position="79"/>
    </location>
</feature>
<feature type="repeat" description="HEAT 3" evidence="2">
    <location>
        <begin position="88"/>
        <end position="121"/>
    </location>
</feature>
<feature type="repeat" description="HEAT 4" evidence="2">
    <location>
        <begin position="127"/>
        <end position="164"/>
    </location>
</feature>
<feature type="repeat" description="HEAT 5" evidence="2">
    <location>
        <begin position="171"/>
        <end position="201"/>
    </location>
</feature>
<feature type="repeat" description="HEAT 6" evidence="2">
    <location>
        <begin position="214"/>
        <end position="241"/>
    </location>
</feature>
<feature type="repeat" description="HEAT 7" evidence="2">
    <location>
        <begin position="253"/>
        <end position="280"/>
    </location>
</feature>
<feature type="repeat" description="HEAT 8" evidence="2">
    <location>
        <begin position="296"/>
        <end position="386"/>
    </location>
</feature>
<feature type="repeat" description="HEAT 9" evidence="2">
    <location>
        <begin position="394"/>
        <end position="422"/>
    </location>
</feature>
<feature type="repeat" description="HEAT 10" evidence="2">
    <location>
        <begin position="434"/>
        <end position="461"/>
    </location>
</feature>
<feature type="repeat" description="HEAT 11" evidence="2">
    <location>
        <begin position="475"/>
        <end position="508"/>
    </location>
</feature>
<feature type="repeat" description="HEAT 12" evidence="2">
    <location>
        <begin position="516"/>
        <end position="549"/>
    </location>
</feature>
<feature type="repeat" description="HEAT 13" evidence="2">
    <location>
        <begin position="557"/>
        <end position="595"/>
    </location>
</feature>
<feature type="repeat" description="HEAT 14" evidence="2">
    <location>
        <begin position="603"/>
        <end position="654"/>
    </location>
</feature>
<feature type="repeat" description="HEAT 15" evidence="2">
    <location>
        <begin position="665"/>
        <end position="696"/>
    </location>
</feature>
<feature type="repeat" description="HEAT 16" evidence="2">
    <location>
        <begin position="704"/>
        <end position="737"/>
    </location>
</feature>
<feature type="repeat" description="HEAT 17" evidence="2">
    <location>
        <begin position="745"/>
        <end position="790"/>
    </location>
</feature>
<feature type="repeat" description="HEAT 18" evidence="2">
    <location>
        <begin position="798"/>
        <end position="831"/>
    </location>
</feature>
<feature type="repeat" description="HEAT 19" evidence="2">
    <location>
        <begin position="840"/>
        <end position="871"/>
    </location>
</feature>
<feature type="repeat" description="HEAT 20" evidence="2">
    <location>
        <begin position="874"/>
        <end position="894"/>
    </location>
</feature>
<feature type="region of interest" description="Disordered" evidence="3">
    <location>
        <begin position="325"/>
        <end position="364"/>
    </location>
</feature>
<feature type="compositionally biased region" description="Acidic residues" evidence="3">
    <location>
        <begin position="355"/>
        <end position="364"/>
    </location>
</feature>
<feature type="modified residue" description="N6-acetyllysine" evidence="10">
    <location>
        <position position="862"/>
    </location>
</feature>
<feature type="splice variant" id="VSP_009657" description="In isoform 2." evidence="7 8">
    <location>
        <begin position="769"/>
        <end position="778"/>
    </location>
</feature>
<feature type="sequence variant" id="VAR_086356" description="In IDDHISD." evidence="5">
    <original>Q</original>
    <variation>R</variation>
    <location>
        <position position="28"/>
    </location>
</feature>
<feature type="sequence variant" id="VAR_086357" description="In IDDHISD." evidence="5 6">
    <original>Q</original>
    <variation>R</variation>
    <location>
        <position position="32"/>
    </location>
</feature>
<feature type="sequence variant" id="VAR_086358" description="In IDDHISD." evidence="5">
    <original>P</original>
    <variation>R</variation>
    <location>
        <position position="61"/>
    </location>
</feature>
<feature type="sequence variant" id="VAR_086359" description="In IDDHISD." evidence="5">
    <original>K</original>
    <variation>N</variation>
    <location>
        <position position="118"/>
    </location>
</feature>
<feature type="sequence variant" id="VAR_086360" description="In IDDHISD." evidence="5">
    <original>D</original>
    <variation>N</variation>
    <location>
        <position position="156"/>
    </location>
</feature>
<feature type="sequence variant" id="VAR_069373" description="In IDDHISD." evidence="4 5">
    <original>W</original>
    <variation>C</variation>
    <location>
        <position position="370"/>
    </location>
</feature>
<feature type="sequence variant" id="VAR_086361" description="In IDDHISD." evidence="5">
    <original>W</original>
    <variation>R</variation>
    <location>
        <position position="370"/>
    </location>
</feature>
<feature type="sequence variant" id="VAR_086362" description="In IDDHISD." evidence="5">
    <original>KR</original>
    <variation>QW</variation>
    <location>
        <begin position="491"/>
        <end position="492"/>
    </location>
</feature>
<feature type="sequence variant" id="VAR_086363" description="In IDDHISD." evidence="5">
    <original>P</original>
    <variation>L</variation>
    <location>
        <position position="514"/>
    </location>
</feature>
<feature type="sequence variant" id="VAR_086364" description="In IDDHISD." evidence="5">
    <original>A</original>
    <variation>V</variation>
    <location>
        <position position="546"/>
    </location>
</feature>
<feature type="sequence variant" id="VAR_086365" description="In IDDHISD." evidence="5">
    <original>S</original>
    <variation>F</variation>
    <location>
        <position position="548"/>
    </location>
</feature>
<feature type="sequence variant" id="VAR_086366" description="In IDDHISD." evidence="5">
    <location>
        <begin position="649"/>
        <end position="652"/>
    </location>
</feature>
<feature type="sequence variant" id="VAR_086367" description="In IDDHISD." evidence="5">
    <original>W</original>
    <variation>C</variation>
    <location>
        <position position="727"/>
    </location>
</feature>
<feature type="sequence conflict" description="In Ref. 2; AAB71349." evidence="9" ref="2">
    <original>Q</original>
    <variation>H</variation>
    <location>
        <position position="28"/>
    </location>
</feature>
<feature type="sequence conflict" description="In Ref. 2; AAB71349." evidence="9" ref="2">
    <original>A</original>
    <variation>G</variation>
    <location>
        <position position="194"/>
    </location>
</feature>
<feature type="sequence conflict" description="In Ref. 1; AAB83973." evidence="9" ref="1">
    <original>LLKG</original>
    <variation>YQS</variation>
    <location>
        <begin position="398"/>
        <end position="401"/>
    </location>
</feature>
<feature type="sequence conflict" description="In Ref. 2; AAB71349." evidence="9" ref="2">
    <original>R</original>
    <variation>K</variation>
    <location>
        <position position="492"/>
    </location>
</feature>
<feature type="sequence conflict" description="In Ref. 2; AAB71349." evidence="9" ref="2">
    <original>S</original>
    <variation>I</variation>
    <location>
        <position position="499"/>
    </location>
</feature>
<feature type="sequence conflict" description="In Ref. 2; AAB71349." evidence="9" ref="2">
    <original>E</original>
    <variation>K</variation>
    <location>
        <position position="507"/>
    </location>
</feature>
<feature type="sequence conflict" description="In Ref. 2; AAB71349." evidence="9" ref="2">
    <original>R</original>
    <variation>C</variation>
    <location>
        <position position="608"/>
    </location>
</feature>
<feature type="sequence conflict" description="In Ref. 2; AAB71349." evidence="9" ref="2">
    <original>L</original>
    <variation>F</variation>
    <location>
        <position position="645"/>
    </location>
</feature>
<feature type="sequence conflict" description="In Ref. 1; AAB83973." evidence="9" ref="1">
    <original>S</original>
    <variation>T</variation>
    <location>
        <position position="646"/>
    </location>
</feature>
<feature type="sequence conflict" description="In Ref. 1; AAB83973." evidence="9" ref="1">
    <original>V</original>
    <variation>L</variation>
    <location>
        <position position="656"/>
    </location>
</feature>
<feature type="sequence conflict" description="In Ref. 2; AAB71349." evidence="9" ref="2">
    <original>L</original>
    <variation>F</variation>
    <location>
        <position position="687"/>
    </location>
</feature>
<feature type="sequence conflict" description="In Ref. 2; AAB71349." evidence="9" ref="2">
    <original>L</original>
    <variation>F</variation>
    <location>
        <position position="691"/>
    </location>
</feature>
<feature type="sequence conflict" description="In Ref. 2; AAB71349." evidence="9" ref="2">
    <original>FI</original>
    <variation>SS</variation>
    <location>
        <begin position="696"/>
        <end position="697"/>
    </location>
</feature>
<feature type="sequence conflict" description="In Ref. 1; AAB83973." evidence="9" ref="1">
    <original>E</original>
    <variation>K</variation>
    <location>
        <position position="717"/>
    </location>
</feature>
<feature type="sequence conflict" description="In Ref. 1; AAB83973." evidence="9" ref="1">
    <original>R</original>
    <variation>Q</variation>
    <location>
        <position position="812"/>
    </location>
</feature>
<feature type="sequence conflict" description="In Ref. 2; AAB71349." evidence="9" ref="2">
    <original>F</original>
    <variation>L</variation>
    <location>
        <position position="841"/>
    </location>
</feature>
<evidence type="ECO:0000250" key="1"/>
<evidence type="ECO:0000250" key="2">
    <source>
        <dbReference type="UniProtKB" id="Q92973"/>
    </source>
</evidence>
<evidence type="ECO:0000256" key="3">
    <source>
        <dbReference type="SAM" id="MobiDB-lite"/>
    </source>
</evidence>
<evidence type="ECO:0000269" key="4">
    <source>
    </source>
</evidence>
<evidence type="ECO:0000269" key="5">
    <source>
    </source>
</evidence>
<evidence type="ECO:0000269" key="6">
    <source ref="2"/>
</evidence>
<evidence type="ECO:0000303" key="7">
    <source>
    </source>
</evidence>
<evidence type="ECO:0000303" key="8">
    <source ref="2"/>
</evidence>
<evidence type="ECO:0000305" key="9"/>
<evidence type="ECO:0007744" key="10">
    <source>
    </source>
</evidence>